<proteinExistence type="evidence at transcript level"/>
<reference key="1">
    <citation type="journal article" date="2000" name="Nature">
        <title>Sequence and analysis of chromosome 1 of the plant Arabidopsis thaliana.</title>
        <authorList>
            <person name="Theologis A."/>
            <person name="Ecker J.R."/>
            <person name="Palm C.J."/>
            <person name="Federspiel N.A."/>
            <person name="Kaul S."/>
            <person name="White O."/>
            <person name="Alonso J."/>
            <person name="Altafi H."/>
            <person name="Araujo R."/>
            <person name="Bowman C.L."/>
            <person name="Brooks S.Y."/>
            <person name="Buehler E."/>
            <person name="Chan A."/>
            <person name="Chao Q."/>
            <person name="Chen H."/>
            <person name="Cheuk R.F."/>
            <person name="Chin C.W."/>
            <person name="Chung M.K."/>
            <person name="Conn L."/>
            <person name="Conway A.B."/>
            <person name="Conway A.R."/>
            <person name="Creasy T.H."/>
            <person name="Dewar K."/>
            <person name="Dunn P."/>
            <person name="Etgu P."/>
            <person name="Feldblyum T.V."/>
            <person name="Feng J.-D."/>
            <person name="Fong B."/>
            <person name="Fujii C.Y."/>
            <person name="Gill J.E."/>
            <person name="Goldsmith A.D."/>
            <person name="Haas B."/>
            <person name="Hansen N.F."/>
            <person name="Hughes B."/>
            <person name="Huizar L."/>
            <person name="Hunter J.L."/>
            <person name="Jenkins J."/>
            <person name="Johnson-Hopson C."/>
            <person name="Khan S."/>
            <person name="Khaykin E."/>
            <person name="Kim C.J."/>
            <person name="Koo H.L."/>
            <person name="Kremenetskaia I."/>
            <person name="Kurtz D.B."/>
            <person name="Kwan A."/>
            <person name="Lam B."/>
            <person name="Langin-Hooper S."/>
            <person name="Lee A."/>
            <person name="Lee J.M."/>
            <person name="Lenz C.A."/>
            <person name="Li J.H."/>
            <person name="Li Y.-P."/>
            <person name="Lin X."/>
            <person name="Liu S.X."/>
            <person name="Liu Z.A."/>
            <person name="Luros J.S."/>
            <person name="Maiti R."/>
            <person name="Marziali A."/>
            <person name="Militscher J."/>
            <person name="Miranda M."/>
            <person name="Nguyen M."/>
            <person name="Nierman W.C."/>
            <person name="Osborne B.I."/>
            <person name="Pai G."/>
            <person name="Peterson J."/>
            <person name="Pham P.K."/>
            <person name="Rizzo M."/>
            <person name="Rooney T."/>
            <person name="Rowley D."/>
            <person name="Sakano H."/>
            <person name="Salzberg S.L."/>
            <person name="Schwartz J.R."/>
            <person name="Shinn P."/>
            <person name="Southwick A.M."/>
            <person name="Sun H."/>
            <person name="Tallon L.J."/>
            <person name="Tambunga G."/>
            <person name="Toriumi M.J."/>
            <person name="Town C.D."/>
            <person name="Utterback T."/>
            <person name="Van Aken S."/>
            <person name="Vaysberg M."/>
            <person name="Vysotskaia V.S."/>
            <person name="Walker M."/>
            <person name="Wu D."/>
            <person name="Yu G."/>
            <person name="Fraser C.M."/>
            <person name="Venter J.C."/>
            <person name="Davis R.W."/>
        </authorList>
    </citation>
    <scope>NUCLEOTIDE SEQUENCE [LARGE SCALE GENOMIC DNA]</scope>
    <source>
        <strain>cv. Columbia</strain>
    </source>
</reference>
<reference key="2">
    <citation type="journal article" date="2017" name="Plant J.">
        <title>Araport11: a complete reannotation of the Arabidopsis thaliana reference genome.</title>
        <authorList>
            <person name="Cheng C.Y."/>
            <person name="Krishnakumar V."/>
            <person name="Chan A.P."/>
            <person name="Thibaud-Nissen F."/>
            <person name="Schobel S."/>
            <person name="Town C.D."/>
        </authorList>
    </citation>
    <scope>GENOME REANNOTATION</scope>
    <source>
        <strain>cv. Columbia</strain>
    </source>
</reference>
<reference key="3">
    <citation type="submission" date="2006-12" db="EMBL/GenBank/DDBJ databases">
        <title>Arabidopsis ORF clones.</title>
        <authorList>
            <person name="Bautista V.R."/>
            <person name="Kim C.J."/>
            <person name="Chen H."/>
            <person name="Wu S.Y."/>
            <person name="De Los Reyes C."/>
            <person name="Ecker J.R."/>
        </authorList>
    </citation>
    <scope>NUCLEOTIDE SEQUENCE [LARGE SCALE MRNA]</scope>
    <source>
        <strain>cv. Columbia</strain>
    </source>
</reference>
<accession>P0C2G0</accession>
<accession>A1L4Z1</accession>
<accession>F4IDP7</accession>
<accession>Q9SHK4</accession>
<feature type="chain" id="PRO_0000274943" description="F-box/LRR-repeat protein At1g06630">
    <location>
        <begin position="1"/>
        <end position="403"/>
    </location>
</feature>
<feature type="domain" description="F-box" evidence="1">
    <location>
        <begin position="11"/>
        <end position="59"/>
    </location>
</feature>
<feature type="repeat" description="LRR 1">
    <location>
        <begin position="239"/>
        <end position="262"/>
    </location>
</feature>
<feature type="repeat" description="LRR 2">
    <location>
        <begin position="288"/>
        <end position="312"/>
    </location>
</feature>
<keyword id="KW-0025">Alternative splicing</keyword>
<keyword id="KW-0433">Leucine-rich repeat</keyword>
<keyword id="KW-1185">Reference proteome</keyword>
<keyword id="KW-0677">Repeat</keyword>
<name>FBL27_ARATH</name>
<sequence length="403" mass="45430">MDAKKLDTGPRDAINWLPDEILGKILSLLATKQAVSTSVLSKKWRTLFKLVDTLEFDDSVSGMGEQEASYVFPESFKDLVDRTVALQCDYPIRKLSLKCHVGRDDEQRKACVGRWISNVVGRGVSEVVLRINDRGLHFLSPQLLTCKTLVKLTLGTRLFLGKLPSYVSLPSLKFLFIHSVFFDDFGELSNVLLAGCPVVEALYLNQNGESMPYTISSPTLKRLSVHYEYHFESVISFDLPNLEYLDYSDYALYGYPQVNLESLVEAYLNLDKAEHVESPDVTKLIMGIRNVEILSLSPDSVGVIYSCCKYGLLLPVFNNLVSLSFGTKKTRAWKLLADILKQSPKLETLIIEDLNGYPLDVSMPLNQVKELQILEYGESDDEVKRLKSFLGEESMIEVVFPEV</sequence>
<comment type="alternative products">
    <event type="alternative splicing"/>
    <isoform>
        <id>P0C2G0-1</id>
        <name>1</name>
        <sequence type="displayed"/>
    </isoform>
    <text>A number of isoforms are produced. According to EST sequences.</text>
</comment>
<comment type="sequence caution" evidence="2">
    <conflict type="erroneous gene model prediction">
        <sequence resource="EMBL-CDS" id="AAF24827"/>
    </conflict>
    <text>The predicted gene At1g06630 has been split into 4 genes: At1g06620, At1g06630, At1g06640 and At1g06650.</text>
</comment>
<dbReference type="EMBL" id="AC007592">
    <property type="protein sequence ID" value="AAF24827.1"/>
    <property type="status" value="ALT_SEQ"/>
    <property type="molecule type" value="Genomic_DNA"/>
</dbReference>
<dbReference type="EMBL" id="CP002684">
    <property type="protein sequence ID" value="AEE28012.1"/>
    <property type="molecule type" value="Genomic_DNA"/>
</dbReference>
<dbReference type="EMBL" id="CP002684">
    <property type="protein sequence ID" value="AEE28013.2"/>
    <property type="molecule type" value="Genomic_DNA"/>
</dbReference>
<dbReference type="EMBL" id="CP002684">
    <property type="protein sequence ID" value="ANM59333.1"/>
    <property type="molecule type" value="Genomic_DNA"/>
</dbReference>
<dbReference type="EMBL" id="CP002684">
    <property type="protein sequence ID" value="ANM59335.1"/>
    <property type="molecule type" value="Genomic_DNA"/>
</dbReference>
<dbReference type="EMBL" id="BT029778">
    <property type="protein sequence ID" value="ABM06048.1"/>
    <property type="molecule type" value="mRNA"/>
</dbReference>
<dbReference type="PIR" id="D86201">
    <property type="entry name" value="D86201"/>
</dbReference>
<dbReference type="RefSeq" id="NP_001154312.1">
    <molecule id="P0C2G0-1"/>
    <property type="nucleotide sequence ID" value="NM_001160840.2"/>
</dbReference>
<dbReference type="RefSeq" id="NP_001318935.1">
    <molecule id="P0C2G0-1"/>
    <property type="nucleotide sequence ID" value="NM_001331636.1"/>
</dbReference>
<dbReference type="RefSeq" id="NP_001321698.1">
    <molecule id="P0C2G0-1"/>
    <property type="nucleotide sequence ID" value="NM_001331637.1"/>
</dbReference>
<dbReference type="RefSeq" id="NP_001321700.1">
    <molecule id="P0C2G0-1"/>
    <property type="nucleotide sequence ID" value="NM_001331639.1"/>
</dbReference>
<dbReference type="FunCoup" id="P0C2G0">
    <property type="interactions" value="213"/>
</dbReference>
<dbReference type="PaxDb" id="3702-AT1G06630.1"/>
<dbReference type="ProteomicsDB" id="230993">
    <molecule id="P0C2G0-1"/>
</dbReference>
<dbReference type="EnsemblPlants" id="AT1G06630.2">
    <molecule id="P0C2G0-1"/>
    <property type="protein sequence ID" value="AT1G06630.2"/>
    <property type="gene ID" value="AT1G06630"/>
</dbReference>
<dbReference type="EnsemblPlants" id="AT1G06630.3">
    <molecule id="P0C2G0-1"/>
    <property type="protein sequence ID" value="AT1G06630.3"/>
    <property type="gene ID" value="AT1G06630"/>
</dbReference>
<dbReference type="EnsemblPlants" id="AT1G06630.4">
    <molecule id="P0C2G0-1"/>
    <property type="protein sequence ID" value="AT1G06630.4"/>
    <property type="gene ID" value="AT1G06630"/>
</dbReference>
<dbReference type="EnsemblPlants" id="AT1G06630.6">
    <molecule id="P0C2G0-1"/>
    <property type="protein sequence ID" value="AT1G06630.6"/>
    <property type="gene ID" value="AT1G06630"/>
</dbReference>
<dbReference type="GeneID" id="837172"/>
<dbReference type="Gramene" id="AT1G06630.2">
    <molecule id="P0C2G0-1"/>
    <property type="protein sequence ID" value="AT1G06630.2"/>
    <property type="gene ID" value="AT1G06630"/>
</dbReference>
<dbReference type="Gramene" id="AT1G06630.3">
    <molecule id="P0C2G0-1"/>
    <property type="protein sequence ID" value="AT1G06630.3"/>
    <property type="gene ID" value="AT1G06630"/>
</dbReference>
<dbReference type="Gramene" id="AT1G06630.4">
    <molecule id="P0C2G0-1"/>
    <property type="protein sequence ID" value="AT1G06630.4"/>
    <property type="gene ID" value="AT1G06630"/>
</dbReference>
<dbReference type="Gramene" id="AT1G06630.6">
    <molecule id="P0C2G0-1"/>
    <property type="protein sequence ID" value="AT1G06630.6"/>
    <property type="gene ID" value="AT1G06630"/>
</dbReference>
<dbReference type="KEGG" id="ath:AT1G06630"/>
<dbReference type="Araport" id="AT1G06630"/>
<dbReference type="TAIR" id="AT1G06630"/>
<dbReference type="HOGENOM" id="CLU_010721_7_2_1"/>
<dbReference type="InParanoid" id="P0C2G0"/>
<dbReference type="PhylomeDB" id="P0C2G0"/>
<dbReference type="PRO" id="PR:P0C2G0"/>
<dbReference type="Proteomes" id="UP000006548">
    <property type="component" value="Chromosome 1"/>
</dbReference>
<dbReference type="ExpressionAtlas" id="P0C2G0">
    <property type="expression patterns" value="baseline and differential"/>
</dbReference>
<dbReference type="CDD" id="cd22160">
    <property type="entry name" value="F-box_AtFBL13-like"/>
    <property type="match status" value="1"/>
</dbReference>
<dbReference type="Gene3D" id="1.20.1280.50">
    <property type="match status" value="1"/>
</dbReference>
<dbReference type="Gene3D" id="3.80.10.10">
    <property type="entry name" value="Ribonuclease Inhibitor"/>
    <property type="match status" value="1"/>
</dbReference>
<dbReference type="InterPro" id="IPR036047">
    <property type="entry name" value="F-box-like_dom_sf"/>
</dbReference>
<dbReference type="InterPro" id="IPR053781">
    <property type="entry name" value="F-box_AtFBL13-like"/>
</dbReference>
<dbReference type="InterPro" id="IPR001810">
    <property type="entry name" value="F-box_dom"/>
</dbReference>
<dbReference type="InterPro" id="IPR055294">
    <property type="entry name" value="FBL60-like"/>
</dbReference>
<dbReference type="InterPro" id="IPR032675">
    <property type="entry name" value="LRR_dom_sf"/>
</dbReference>
<dbReference type="InterPro" id="IPR055411">
    <property type="entry name" value="LRR_FXL15/At3g58940/PEG3-like"/>
</dbReference>
<dbReference type="PANTHER" id="PTHR31293:SF22">
    <property type="entry name" value="BNAC06G06520D PROTEIN"/>
    <property type="match status" value="1"/>
</dbReference>
<dbReference type="PANTHER" id="PTHR31293">
    <property type="entry name" value="RNI-LIKE SUPERFAMILY PROTEIN"/>
    <property type="match status" value="1"/>
</dbReference>
<dbReference type="Pfam" id="PF00646">
    <property type="entry name" value="F-box"/>
    <property type="match status" value="1"/>
</dbReference>
<dbReference type="Pfam" id="PF24758">
    <property type="entry name" value="LRR_At5g56370"/>
    <property type="match status" value="1"/>
</dbReference>
<dbReference type="SMART" id="SM00256">
    <property type="entry name" value="FBOX"/>
    <property type="match status" value="1"/>
</dbReference>
<dbReference type="SUPFAM" id="SSF81383">
    <property type="entry name" value="F-box domain"/>
    <property type="match status" value="1"/>
</dbReference>
<dbReference type="SUPFAM" id="SSF52058">
    <property type="entry name" value="L domain-like"/>
    <property type="match status" value="1"/>
</dbReference>
<dbReference type="PROSITE" id="PS50181">
    <property type="entry name" value="FBOX"/>
    <property type="match status" value="1"/>
</dbReference>
<evidence type="ECO:0000255" key="1">
    <source>
        <dbReference type="PROSITE-ProRule" id="PRU00080"/>
    </source>
</evidence>
<evidence type="ECO:0000305" key="2"/>
<gene>
    <name type="ordered locus">At1g06630</name>
    <name type="ORF">F12K11.23</name>
    <name type="ORF">F12K11.6</name>
</gene>
<organism>
    <name type="scientific">Arabidopsis thaliana</name>
    <name type="common">Mouse-ear cress</name>
    <dbReference type="NCBI Taxonomy" id="3702"/>
    <lineage>
        <taxon>Eukaryota</taxon>
        <taxon>Viridiplantae</taxon>
        <taxon>Streptophyta</taxon>
        <taxon>Embryophyta</taxon>
        <taxon>Tracheophyta</taxon>
        <taxon>Spermatophyta</taxon>
        <taxon>Magnoliopsida</taxon>
        <taxon>eudicotyledons</taxon>
        <taxon>Gunneridae</taxon>
        <taxon>Pentapetalae</taxon>
        <taxon>rosids</taxon>
        <taxon>malvids</taxon>
        <taxon>Brassicales</taxon>
        <taxon>Brassicaceae</taxon>
        <taxon>Camelineae</taxon>
        <taxon>Arabidopsis</taxon>
    </lineage>
</organism>
<protein>
    <recommendedName>
        <fullName>F-box/LRR-repeat protein At1g06630</fullName>
    </recommendedName>
</protein>